<gene>
    <name evidence="1" type="primary">sstT</name>
    <name type="ordered locus">SeHA_C3520</name>
</gene>
<name>SSTT_SALHS</name>
<dbReference type="EMBL" id="CP001120">
    <property type="protein sequence ID" value="ACF66878.1"/>
    <property type="molecule type" value="Genomic_DNA"/>
</dbReference>
<dbReference type="RefSeq" id="WP_000235361.1">
    <property type="nucleotide sequence ID" value="NC_011083.1"/>
</dbReference>
<dbReference type="SMR" id="B4TIV3"/>
<dbReference type="KEGG" id="seh:SeHA_C3520"/>
<dbReference type="HOGENOM" id="CLU_044581_0_0_6"/>
<dbReference type="Proteomes" id="UP000001866">
    <property type="component" value="Chromosome"/>
</dbReference>
<dbReference type="GO" id="GO:0005886">
    <property type="term" value="C:plasma membrane"/>
    <property type="evidence" value="ECO:0007669"/>
    <property type="project" value="UniProtKB-SubCell"/>
</dbReference>
<dbReference type="GO" id="GO:0005295">
    <property type="term" value="F:neutral L-amino acid:sodium symporter activity"/>
    <property type="evidence" value="ECO:0007669"/>
    <property type="project" value="TreeGrafter"/>
</dbReference>
<dbReference type="GO" id="GO:0032329">
    <property type="term" value="P:serine transport"/>
    <property type="evidence" value="ECO:0007669"/>
    <property type="project" value="InterPro"/>
</dbReference>
<dbReference type="GO" id="GO:0015826">
    <property type="term" value="P:threonine transport"/>
    <property type="evidence" value="ECO:0007669"/>
    <property type="project" value="InterPro"/>
</dbReference>
<dbReference type="FunFam" id="1.10.3860.10:FF:000003">
    <property type="entry name" value="Serine/threonine transporter sstT"/>
    <property type="match status" value="1"/>
</dbReference>
<dbReference type="Gene3D" id="1.10.3860.10">
    <property type="entry name" value="Sodium:dicarboxylate symporter"/>
    <property type="match status" value="1"/>
</dbReference>
<dbReference type="HAMAP" id="MF_01582">
    <property type="entry name" value="Ser_Thr_transp_SstT"/>
    <property type="match status" value="1"/>
</dbReference>
<dbReference type="InterPro" id="IPR001991">
    <property type="entry name" value="Na-dicarboxylate_symporter"/>
</dbReference>
<dbReference type="InterPro" id="IPR036458">
    <property type="entry name" value="Na:dicarbo_symporter_sf"/>
</dbReference>
<dbReference type="InterPro" id="IPR023025">
    <property type="entry name" value="Ser_Thr_transp_SstT"/>
</dbReference>
<dbReference type="NCBIfam" id="NF010151">
    <property type="entry name" value="PRK13628.1"/>
    <property type="match status" value="1"/>
</dbReference>
<dbReference type="PANTHER" id="PTHR42865">
    <property type="entry name" value="PROTON/GLUTAMATE-ASPARTATE SYMPORTER"/>
    <property type="match status" value="1"/>
</dbReference>
<dbReference type="PANTHER" id="PTHR42865:SF8">
    <property type="entry name" value="SERINE_THREONINE TRANSPORTER SSTT"/>
    <property type="match status" value="1"/>
</dbReference>
<dbReference type="Pfam" id="PF00375">
    <property type="entry name" value="SDF"/>
    <property type="match status" value="1"/>
</dbReference>
<dbReference type="PRINTS" id="PR00173">
    <property type="entry name" value="EDTRNSPORT"/>
</dbReference>
<dbReference type="SUPFAM" id="SSF118215">
    <property type="entry name" value="Proton glutamate symport protein"/>
    <property type="match status" value="1"/>
</dbReference>
<dbReference type="PROSITE" id="PS00713">
    <property type="entry name" value="NA_DICARBOXYL_SYMP_1"/>
    <property type="match status" value="1"/>
</dbReference>
<proteinExistence type="inferred from homology"/>
<feature type="chain" id="PRO_1000197561" description="Serine/threonine transporter SstT">
    <location>
        <begin position="1"/>
        <end position="414"/>
    </location>
</feature>
<feature type="transmembrane region" description="Helical" evidence="1">
    <location>
        <begin position="16"/>
        <end position="36"/>
    </location>
</feature>
<feature type="transmembrane region" description="Helical" evidence="1">
    <location>
        <begin position="46"/>
        <end position="66"/>
    </location>
</feature>
<feature type="transmembrane region" description="Helical" evidence="1">
    <location>
        <begin position="84"/>
        <end position="104"/>
    </location>
</feature>
<feature type="transmembrane region" description="Helical" evidence="1">
    <location>
        <begin position="143"/>
        <end position="163"/>
    </location>
</feature>
<feature type="transmembrane region" description="Helical" evidence="1">
    <location>
        <begin position="180"/>
        <end position="200"/>
    </location>
</feature>
<feature type="transmembrane region" description="Helical" evidence="1">
    <location>
        <begin position="219"/>
        <end position="239"/>
    </location>
</feature>
<feature type="transmembrane region" description="Helical" evidence="1">
    <location>
        <begin position="300"/>
        <end position="320"/>
    </location>
</feature>
<feature type="transmembrane region" description="Helical" evidence="1">
    <location>
        <begin position="332"/>
        <end position="352"/>
    </location>
</feature>
<keyword id="KW-0029">Amino-acid transport</keyword>
<keyword id="KW-0997">Cell inner membrane</keyword>
<keyword id="KW-1003">Cell membrane</keyword>
<keyword id="KW-0472">Membrane</keyword>
<keyword id="KW-0769">Symport</keyword>
<keyword id="KW-0812">Transmembrane</keyword>
<keyword id="KW-1133">Transmembrane helix</keyword>
<keyword id="KW-0813">Transport</keyword>
<accession>B4TIV3</accession>
<evidence type="ECO:0000255" key="1">
    <source>
        <dbReference type="HAMAP-Rule" id="MF_01582"/>
    </source>
</evidence>
<sequence>MATQRASGLLQRLAQGSLVKQILVGLVLGILLAWISKPAAEAVGLLGTLFVGALKAVAPVLVLMLVMASIANHQHGQKTNIRPILFLYLLGTFSAALAAVVFSFAFPSTLHLSSSAQDIVPPSGIVEVLRGLLMSMVSNPIDALLNANYIGILVWAVGLGFALRHGNETTKNLVNDMSNAVTFMVKLVIRFAPVGIFGLVSSTLATTGFSTLWGYAHLLVVLIGCMLLVALMVNPLLVFWKIRRNPYPLVFACLRESGVYAFFTRSSAANIPVNMALCEKLNLDRDTYSVSIPLGATINMAGAAITITVLTLAAVHTLGVPVDLPTALLLSVVASLCACGASGVAGGSLLLIPLACNMFGIPNDIAMQVVAVGFIIGVLQDSCETALNSSTDVLFTAAACQAEDERLANNALRS</sequence>
<comment type="function">
    <text evidence="1">Involved in the import of serine and threonine into the cell, with the concomitant import of sodium (symport system).</text>
</comment>
<comment type="catalytic activity">
    <reaction evidence="1">
        <text>L-serine(in) + Na(+)(in) = L-serine(out) + Na(+)(out)</text>
        <dbReference type="Rhea" id="RHEA:29575"/>
        <dbReference type="ChEBI" id="CHEBI:29101"/>
        <dbReference type="ChEBI" id="CHEBI:33384"/>
    </reaction>
    <physiologicalReaction direction="right-to-left" evidence="1">
        <dbReference type="Rhea" id="RHEA:29577"/>
    </physiologicalReaction>
</comment>
<comment type="catalytic activity">
    <reaction evidence="1">
        <text>L-threonine(in) + Na(+)(in) = L-threonine(out) + Na(+)(out)</text>
        <dbReference type="Rhea" id="RHEA:69999"/>
        <dbReference type="ChEBI" id="CHEBI:29101"/>
        <dbReference type="ChEBI" id="CHEBI:57926"/>
    </reaction>
    <physiologicalReaction direction="right-to-left" evidence="1">
        <dbReference type="Rhea" id="RHEA:70001"/>
    </physiologicalReaction>
</comment>
<comment type="subcellular location">
    <subcellularLocation>
        <location evidence="1">Cell inner membrane</location>
        <topology evidence="1">Multi-pass membrane protein</topology>
    </subcellularLocation>
</comment>
<comment type="similarity">
    <text evidence="1">Belongs to the dicarboxylate/amino acid:cation symporter (DAACS) (TC 2.A.23) family.</text>
</comment>
<reference key="1">
    <citation type="journal article" date="2011" name="J. Bacteriol.">
        <title>Comparative genomics of 28 Salmonella enterica isolates: evidence for CRISPR-mediated adaptive sublineage evolution.</title>
        <authorList>
            <person name="Fricke W.F."/>
            <person name="Mammel M.K."/>
            <person name="McDermott P.F."/>
            <person name="Tartera C."/>
            <person name="White D.G."/>
            <person name="Leclerc J.E."/>
            <person name="Ravel J."/>
            <person name="Cebula T.A."/>
        </authorList>
    </citation>
    <scope>NUCLEOTIDE SEQUENCE [LARGE SCALE GENOMIC DNA]</scope>
    <source>
        <strain>SL476</strain>
    </source>
</reference>
<protein>
    <recommendedName>
        <fullName evidence="1">Serine/threonine transporter SstT</fullName>
    </recommendedName>
    <alternativeName>
        <fullName evidence="1">Na(+)/serine-threonine symporter</fullName>
    </alternativeName>
</protein>
<organism>
    <name type="scientific">Salmonella heidelberg (strain SL476)</name>
    <dbReference type="NCBI Taxonomy" id="454169"/>
    <lineage>
        <taxon>Bacteria</taxon>
        <taxon>Pseudomonadati</taxon>
        <taxon>Pseudomonadota</taxon>
        <taxon>Gammaproteobacteria</taxon>
        <taxon>Enterobacterales</taxon>
        <taxon>Enterobacteriaceae</taxon>
        <taxon>Salmonella</taxon>
    </lineage>
</organism>